<evidence type="ECO:0000250" key="1">
    <source>
        <dbReference type="UniProtKB" id="P03609"/>
    </source>
</evidence>
<evidence type="ECO:0000255" key="2"/>
<evidence type="ECO:0000305" key="3"/>
<comment type="function">
    <text evidence="1">Induces the formation of specific membrane adhesion sites between the inner and outer membranes, apparently leading to host cell lysis. Lysis may be performed via activation of host murein hydrolases.</text>
</comment>
<comment type="subcellular location">
    <subcellularLocation>
        <location evidence="1">Host cell inner membrane</location>
        <topology evidence="2">Single-pass membrane protein</topology>
    </subcellularLocation>
    <subcellularLocation>
        <location evidence="1">Host cell outer membrane</location>
        <topology evidence="2">Single-pass membrane protein</topology>
    </subcellularLocation>
</comment>
<comment type="similarity">
    <text evidence="3">Belongs to the Leviviricetes lysis protein family.</text>
</comment>
<organismHost>
    <name type="scientific">Escherichia coli</name>
    <dbReference type="NCBI Taxonomy" id="562"/>
</organismHost>
<organism>
    <name type="scientific">Enterobacteria phage GA</name>
    <name type="common">Bacteriophage GA</name>
    <dbReference type="NCBI Taxonomy" id="12018"/>
    <lineage>
        <taxon>Viruses</taxon>
        <taxon>Riboviria</taxon>
        <taxon>Orthornavirae</taxon>
        <taxon>Lenarviricota</taxon>
        <taxon>Leviviricetes</taxon>
        <taxon>Norzivirales</taxon>
        <taxon>Fiersviridae</taxon>
        <taxon>Emesvirus</taxon>
        <taxon>Escherichia phage BZ13</taxon>
    </lineage>
</organism>
<proteinExistence type="inferred from homology"/>
<keyword id="KW-0204">Cytolysis</keyword>
<keyword id="KW-1030">Host cell inner membrane</keyword>
<keyword id="KW-0578">Host cell lysis by virus</keyword>
<keyword id="KW-1032">Host cell membrane</keyword>
<keyword id="KW-1033">Host cell outer membrane</keyword>
<keyword id="KW-1043">Host membrane</keyword>
<keyword id="KW-0472">Membrane</keyword>
<keyword id="KW-1185">Reference proteome</keyword>
<keyword id="KW-0812">Transmembrane</keyword>
<keyword id="KW-1133">Transmembrane helix</keyword>
<keyword id="KW-1188">Viral release from host cell</keyword>
<feature type="chain" id="PRO_0000164862" description="Lysis protein">
    <location>
        <begin position="1"/>
        <end position="63"/>
    </location>
</feature>
<feature type="transmembrane region" description="Helical" evidence="2">
    <location>
        <begin position="21"/>
        <end position="43"/>
    </location>
</feature>
<accession>P07233</accession>
<sequence>MGLKAKHKENLCSDSERSKRLYVWIALAIVLSDFTSIFSHWIWGLLILYLQTLMDLPTFVMNV</sequence>
<protein>
    <recommendedName>
        <fullName>Lysis protein</fullName>
    </recommendedName>
</protein>
<dbReference type="EMBL" id="X03869">
    <property type="protein sequence ID" value="CAA27498.1"/>
    <property type="molecule type" value="mRNA"/>
</dbReference>
<dbReference type="PIR" id="B29178">
    <property type="entry name" value="YVBPGA"/>
</dbReference>
<dbReference type="RefSeq" id="YP_001950239.1">
    <property type="nucleotide sequence ID" value="NC_001426.1"/>
</dbReference>
<dbReference type="GeneID" id="6362555"/>
<dbReference type="KEGG" id="vg:6362555"/>
<dbReference type="Proteomes" id="UP000002126">
    <property type="component" value="Genome"/>
</dbReference>
<dbReference type="GO" id="GO:0020002">
    <property type="term" value="C:host cell plasma membrane"/>
    <property type="evidence" value="ECO:0007669"/>
    <property type="project" value="UniProtKB-SubCell"/>
</dbReference>
<dbReference type="GO" id="GO:0016020">
    <property type="term" value="C:membrane"/>
    <property type="evidence" value="ECO:0007669"/>
    <property type="project" value="UniProtKB-KW"/>
</dbReference>
<dbReference type="GO" id="GO:0031640">
    <property type="term" value="P:killing of cells of another organism"/>
    <property type="evidence" value="ECO:0007669"/>
    <property type="project" value="UniProtKB-KW"/>
</dbReference>
<dbReference type="InterPro" id="IPR022599">
    <property type="entry name" value="Phage_MS2_lysis"/>
</dbReference>
<dbReference type="Pfam" id="PF11125">
    <property type="entry name" value="Phage_MS2_lysis"/>
    <property type="match status" value="1"/>
</dbReference>
<reference key="1">
    <citation type="journal article" date="1986" name="J. Biochem.">
        <title>The complete nucleotide sequence of the group II RNA coliphage GA.</title>
        <authorList>
            <person name="Inokuchi Y."/>
            <person name="Takahashi R."/>
            <person name="Hirose T."/>
            <person name="Inayama S."/>
            <person name="Jacobson A.B."/>
            <person name="Hirashima A."/>
        </authorList>
    </citation>
    <scope>NUCLEOTIDE SEQUENCE [MRNA]</scope>
</reference>
<name>LYS_BPGA</name>